<sequence length="1732" mass="197458">MPGPWGTVYFLGTAQICSFLSSRWNLEGVMNQTDASRPLNWTIRKLCHAAFLPSVRLLKAQKSWIERAFYKRECVHIIPSTKDPHRCCCGRLIGQHVGLTPSISVLQNEKNESRLSRNDIQSEKWSISKHTQLSPTDAFGTIEFQGGGHSNKAMYVRVSFDTKPDLLLHLMTKEWQLELPKLLISVHGGLQNFELQPKLKQVFGKGLIKAAMTTGAWIFTGGVNTGVIRHVGDALKDHASKSRGKICTIGIAPWGIVENQEDLIGRDVVRPYQTMSNPMSKLTVLNSMHSHFILADNGTTGKYGAEVKLRRQLEKHISLQKINTRCLPFFSLDSRLFYSFWGSCQLDPIGIGQGVPVVALIVEGGPNVISIVLEYLRDTPPVPVVVCDGSGRASDILAFGHKYSEEGGLINESLRDQLLVTIQKTFTYTRTQAQHLFIILMECMKKKELITVFRMGSEGHQDIDLAILTALLKGANASAPDQLSLALAWNRVDIARSQIFIYGQQWPVGSLEQAMLDALVLDRVDFVKLLIENGVSMHRFLTISRLEELYNTRHGPSNTLYHLVRDVKKGNLPPDYRISLIDIGLVIEYLMGGAYRCNYTRKRFRTLYHNLFGPKRPKALKLLGMEDDIPLRRGRKTTKKREEEVDIDLDDPEINHFPFPFHELMVWAVLMKRQKMALFFWQHGEEAMAKALVACKLCKAMAHEASENDMVDDISQELNHNSRDFGQLAVELLDQSYKQDEQLAMKLLTYELKNWSNATCLQLAVAAKHRDFIAHTCSQMLLTDMWMGRLRMRKNSGLKVILGILLPPSILSLEFKNKDDMPYMTQAQEIHLQEKEPEEPEKPTKEKDEEDMELTAMLGRSNGESSRKKDEEEVQSRHRLIPVGRKIYEFYNAPIVKFWFYTLAYIGYLMLFNYIVLVKMERWPSTQEWIVISYIFTLGIEKMREILMSEPGKLLQKVKVWLQEYWNVTDLIAILLFSVGMILRLQDQPFRSDGRVIYCVNIIYWYIRLLDIFGVNKYLGPYVMMIGKMMIDMMYFVIIMLVVLMSFGVARQAILFPNEEPSWKLAKNIFYMPYWMIYGEVFADQIDPPCGQNETREDGKTIQLPPCKTGAWIVPAIMACYLLVANILLVNLLIAVFNNTFFEVKSISNQVWKFQRYQLIMTFHERPVLPPPLIIFSHMTMIFQHVCCRWRKHESDQDERDYGLKLFITDDELKKVHDFEEQCIEEYFREKDDRFNSSNDERIRVTSERVENMSMRLEEVNEREHSMKASLQTVDIRLAQLEDLIGRMATALERLTGLERAESNKIRSRTSSDCTDAAYIVRQSSFNSQEGNTFKLQESIDPAGEETISPTSPTLMPRMRSHSFYSVNVKDKGGIEKLESIFKERSLSLHRATSSHSVAKEPKAPAAPANTLAIVPDSRRPSSCIDIYVSAMDELHCDIEPLDNSMNILGLGEPSFSALAPSTTPSSSAYATLAPTDRPPSRSIDFEDLTSMDTRSFSSDYTHLPECQNPWDTDPPTYHTIERSKSSRYLATTPFLLEEAPIVKSHSFMFSPSRSYYANFGVPVKTAEYTSITDCIDTRCVNAPQAIADRATFPGGLGDKVEDLSCCHPEREAELSHPSSDSEENEARGQRAANPISSQEAENADRTLSNNITVPKIERANSYSAEEPNVPYAHTRKSFSISDKLDRQRNTASLRNPFQRSKSSKPEGRGDSLSMRRLSRTSAFHSFESKHN</sequence>
<keyword id="KW-0002">3D-structure</keyword>
<keyword id="KW-0025">Alternative splicing</keyword>
<keyword id="KW-0112">Calmodulin-binding</keyword>
<keyword id="KW-1003">Cell membrane</keyword>
<keyword id="KW-0407">Ion channel</keyword>
<keyword id="KW-0406">Ion transport</keyword>
<keyword id="KW-0472">Membrane</keyword>
<keyword id="KW-0675">Receptor</keyword>
<keyword id="KW-1185">Reference proteome</keyword>
<keyword id="KW-0812">Transmembrane</keyword>
<keyword id="KW-1133">Transmembrane helix</keyword>
<keyword id="KW-0813">Transport</keyword>
<protein>
    <recommendedName>
        <fullName>Transient receptor potential cation channel subfamily M member 3</fullName>
    </recommendedName>
</protein>
<comment type="function">
    <text evidence="1 3 4 5 6 7 10 11 13">Constitutively active, non-selective divalent cation-conducting channel that is permeable to Ca(2+), Mn(2+), and Mg(2+), with a high permeability for Ca(2+) (PubMed:15824111, PubMed:20401728, PubMed:32780479). However, can be enhanced by increasing temperature and by ligands, including the endogenous neurosteroid pregnenolone sulfate and sphingosine-1 and suppressed by intracellular Mg(2+) (PubMed:20401728, PubMed:21555074). Implicated in a variety of cellular processes, including insulin/peptide secretion, vascular constriction and dilation, noxious heat sensing, inflammatory and spontaneous pain sensitivity (PubMed:21555074, PubMed:30853321, PubMed:33478988). In neurons of the dorsal root ganglia, functions as thermosensitive channel for the detection of noxious heat and spontaneous pain (PubMed:21555074, PubMed:33478988). Suggested to function as an ionotropic steroid receptor in beta-cell, indeed pregnenolone sulfate leads to Ca(2+) influx and enhanced insulin secretion (PubMed:18978782). Mediates Zn(2+) uptake into the lumen of pancreatic beta cell secretory granules, thereby regulating insulin secretion (PubMed:20401728). Forms heteromultimeric ion channels with TRPM1 which are permeable for Ca(2+) and Zn(2+) ions (By similarity). Exists as multiple splice variants which differ significantly in their biophysical properties (PubMed:15824111, PubMed:22961981).</text>
</comment>
<comment type="function">
    <molecule>Isoform 8</molecule>
    <text evidence="3">Displays strongly reduced permeability for divalent cations and high selectivity toward monovalent cations.</text>
</comment>
<comment type="function">
    <molecule>Isoform 14</molecule>
    <text evidence="7">No channel activity.</text>
</comment>
<comment type="function">
    <molecule>Isoform 15</molecule>
    <text evidence="7">No channel activity.</text>
</comment>
<comment type="catalytic activity">
    <reaction evidence="3 4 5 11">
        <text>Ca(2+)(in) = Ca(2+)(out)</text>
        <dbReference type="Rhea" id="RHEA:29671"/>
        <dbReference type="ChEBI" id="CHEBI:29108"/>
    </reaction>
</comment>
<comment type="catalytic activity">
    <reaction evidence="5">
        <text>Mn(2+)(in) = Mn(2+)(out)</text>
        <dbReference type="Rhea" id="RHEA:28699"/>
        <dbReference type="ChEBI" id="CHEBI:29035"/>
    </reaction>
</comment>
<comment type="catalytic activity">
    <reaction evidence="5">
        <text>Zn(2+)(in) = Zn(2+)(out)</text>
        <dbReference type="Rhea" id="RHEA:29351"/>
        <dbReference type="ChEBI" id="CHEBI:29105"/>
    </reaction>
</comment>
<comment type="catalytic activity">
    <reaction evidence="5">
        <text>Mg(2+)(in) = Mg(2+)(out)</text>
        <dbReference type="Rhea" id="RHEA:29827"/>
        <dbReference type="ChEBI" id="CHEBI:18420"/>
    </reaction>
</comment>
<comment type="catalytic activity">
    <reaction evidence="3">
        <text>Na(+)(in) = Na(+)(out)</text>
        <dbReference type="Rhea" id="RHEA:34963"/>
        <dbReference type="ChEBI" id="CHEBI:29101"/>
    </reaction>
</comment>
<comment type="activity regulation">
    <text evidence="1 3 4 6 8 9 14">Activated by the neurosteroid pregnelonone sulfate (PregS). PregS activates the channel by shifting its current-voltage activation curve toward more negative membrane potentials and also potentiates temperature-induced activation (PubMed:18978782, PubMed:21555074, PubMed:24251620). Activated by heat (PubMed:21555074). Intracellular Ca(2+) inhibits TRPM3 probably via interaction with Ca(2+)/calmodulin (PubMed:29880196). Intracellular Mg(2+) inhibits TRPM3 activity (PubMed:15824111). Both intracellular and extracellular protons block TRPM3 through propable binding sites in the pore region (By similarity). Positively regulated by phosphoinositide phosphoinositol 4,5-biphosphate (PI(4,5)P2) (By similarity). Strongly inhibited by activation of G(i)-coupled receptors via direct binding with G-beta/gamma-subunits of heterotrimeric G-proteins (PubMed:36283409).</text>
</comment>
<comment type="activity regulation">
    <molecule>Isoform 8</molecule>
    <text evidence="11">Insensitive to pregnenolone sulfate (PregS) or heat.</text>
</comment>
<comment type="activity regulation">
    <molecule>Isoform 10</molecule>
    <text evidence="12">Not inhibited by G-beta/gamma-subunits of heterotrimeric G-proteins.</text>
</comment>
<comment type="activity regulation">
    <molecule>Isoform 7</molecule>
    <text evidence="12">Not inhibited by G-beta/gamma-subunits of heterotrimeric G-proteins.</text>
</comment>
<comment type="subunit">
    <text evidence="1 14">Homotetramer (PubMed:36283409). Interacts with TRPM1; the interaction results in the formation of a heteromultimeric cation channel complex that are functionally different from the homomeric channels (By similarity).</text>
</comment>
<comment type="subcellular location">
    <subcellularLocation>
        <location evidence="1">Cell membrane</location>
        <topology evidence="14">Multi-pass membrane protein</topology>
    </subcellularLocation>
</comment>
<comment type="alternative products">
    <event type="alternative splicing"/>
    <isoform>
        <id>J9SQF3-1</id>
        <name>1</name>
        <name evidence="16">TRPM3beta6</name>
        <sequence type="displayed"/>
    </isoform>
    <isoform>
        <id>J9SQF3-2</id>
        <name>2</name>
        <name evidence="16">TRPM3beta10</name>
        <sequence type="described" ref="VSP_062449"/>
    </isoform>
    <isoform>
        <id>J9SQF3-3</id>
        <name>3</name>
        <name evidence="16">TRPM3beta12</name>
        <sequence type="described" ref="VSP_062450"/>
    </isoform>
    <isoform>
        <id>J9SQF3-4</id>
        <name>4</name>
        <name evidence="16">TRPM3beta11</name>
        <sequence type="described" ref="VSP_062449 VSP_062450"/>
    </isoform>
    <isoform>
        <id>J9SQF3-5</id>
        <name>5</name>
        <name evidence="16">TRPM3beta3</name>
        <sequence type="described" ref="VSP_062447 VSP_062449"/>
    </isoform>
    <isoform>
        <id>J9SQF3-6</id>
        <name>6</name>
        <name evidence="16">TRPM3beta14</name>
        <sequence type="described" ref="VSP_062447 VSP_062449 VSP_062451"/>
    </isoform>
    <isoform>
        <id>J9SQF3-7</id>
        <name>7</name>
        <name evidence="15">TRPM3alpha5</name>
        <sequence type="described" ref="VSP_062446 VSP_062447 VSP_062450"/>
    </isoform>
    <isoform>
        <id>J9SQF3-8</id>
        <name>8</name>
        <name evidence="15">TRPM3alpha1</name>
        <sequence type="described" ref="VSP_062446 VSP_062447 VSP_062452"/>
    </isoform>
    <isoform>
        <id>J9SQF3-9</id>
        <name>9</name>
        <name evidence="15">TRPM3alpha3</name>
        <sequence type="described" ref="VSP_062446 VSP_062447 VSP_062449"/>
    </isoform>
    <isoform>
        <id>J9SQF3-10</id>
        <name>10</name>
        <name evidence="15">TRPM3alpha4</name>
        <sequence type="described" ref="VSP_062446 VSP_062447 VSP_062449 VSP_062450"/>
    </isoform>
    <isoform>
        <id>J9SQF3-11</id>
        <name>11</name>
        <name evidence="16">TRPM3beta1</name>
        <sequence type="described" ref="VSP_062447 VSP_062452"/>
    </isoform>
    <isoform>
        <id>J9SQF3-12</id>
        <name>12</name>
        <name evidence="15">TRPM3alpha2</name>
        <sequence type="described" ref="VSP_062446 VSP_062447"/>
    </isoform>
    <isoform>
        <id>J9SQF3-13</id>
        <name>13</name>
        <sequence type="described" ref="VSP_062447 VSP_062449 VSP_062453 VSP_062454"/>
    </isoform>
    <isoform>
        <id>J9SQF3-14</id>
        <name>14</name>
        <name evidence="16">TRPM3beta7</name>
        <sequence type="described" ref="VSP_062447 VSP_062448"/>
    </isoform>
    <isoform>
        <id>J9SQF3-15</id>
        <name>15</name>
        <name evidence="16">TRPM3beta9</name>
        <sequence type="described" ref="VSP_062447 VSP_062448 VSP_062449 VSP_062450"/>
    </isoform>
    <text evidence="3 7">A number of isoforms are produced with distinct channel characteristics. Exons 1 and 2 are never identified within the same transcript. This exon-specific start leads to different variants called TRPM3alpha starting with exon 1 and lacking exon 2 and isoforms called TRPM3beta starting with exon 2.</text>
</comment>
<comment type="disruption phenotype">
    <text evidence="6 13">Trpm3-deficient mice exhibit clear deficits in their avoidance to noxious heat (PubMed:21555074). Trpm3-deficient mice display reduced hypersensitivity to thermal, but not to mechanical, stimuli in carrageen-induced inflammatory pain. In the chronic constriction injury (CCI) model of neuropathic pain, intraperitoneal injection of isosakuranetin or primidone do not reduced heat sensitivity in Trpm3-deficient mice (PubMed:33478988).</text>
</comment>
<comment type="similarity">
    <text evidence="17">Belongs to the transient receptor (TC 1.A.4) family. LTrpC subfamily. TRPM3 sub-subfamily.</text>
</comment>
<proteinExistence type="evidence at protein level"/>
<gene>
    <name evidence="19" type="primary">Trpm3</name>
</gene>
<feature type="chain" id="PRO_0000461447" description="Transient receptor potential cation channel subfamily M member 3">
    <location>
        <begin position="1"/>
        <end position="1732"/>
    </location>
</feature>
<feature type="topological domain" description="Cytoplasmic" evidence="17">
    <location>
        <begin position="1"/>
        <end position="894"/>
    </location>
</feature>
<feature type="transmembrane region" description="Helical; Name=1" evidence="14">
    <location>
        <begin position="895"/>
        <end position="918"/>
    </location>
</feature>
<feature type="topological domain" description="Extracellular" evidence="17">
    <location>
        <begin position="919"/>
        <end position="925"/>
    </location>
</feature>
<feature type="transmembrane region" description="Helical; Name=2" evidence="14">
    <location>
        <begin position="926"/>
        <end position="948"/>
    </location>
</feature>
<feature type="topological domain" description="Cytoplasmic" evidence="17">
    <location>
        <begin position="949"/>
        <end position="964"/>
    </location>
</feature>
<feature type="transmembrane region" description="Helical; Name=3" evidence="14">
    <location>
        <begin position="965"/>
        <end position="985"/>
    </location>
</feature>
<feature type="topological domain" description="Extracellular" evidence="17">
    <location>
        <begin position="986"/>
        <end position="989"/>
    </location>
</feature>
<feature type="transmembrane region" description="Helical; Name=4" evidence="14">
    <location>
        <begin position="990"/>
        <end position="1013"/>
    </location>
</feature>
<feature type="topological domain" description="Cytoplasmic" evidence="17">
    <location>
        <begin position="1014"/>
        <end position="1028"/>
    </location>
</feature>
<feature type="transmembrane region" description="Helical; Name=5" evidence="14">
    <location>
        <begin position="1029"/>
        <end position="1056"/>
    </location>
</feature>
<feature type="topological domain" description="Extracellular" evidence="17">
    <location>
        <begin position="1057"/>
        <end position="1073"/>
    </location>
</feature>
<feature type="intramembrane region" description="Pore-forming" evidence="18">
    <location>
        <begin position="1074"/>
        <end position="1101"/>
    </location>
</feature>
<feature type="topological domain" description="Extracellular" evidence="17">
    <location>
        <begin position="1102"/>
        <end position="1111"/>
    </location>
</feature>
<feature type="transmembrane region" description="Helical; Name=6" evidence="14">
    <location>
        <begin position="1112"/>
        <end position="1137"/>
    </location>
</feature>
<feature type="topological domain" description="Cytoplasmic" evidence="17">
    <location>
        <begin position="1138"/>
        <end position="1732"/>
    </location>
</feature>
<feature type="region of interest" description="Calmodulin-binding" evidence="9">
    <location>
        <begin position="192"/>
        <end position="215"/>
    </location>
</feature>
<feature type="region of interest" description="Calmodulin-binding" evidence="9">
    <location>
        <begin position="300"/>
        <end position="323"/>
    </location>
</feature>
<feature type="region of interest" description="Calmodulin-binding" evidence="9">
    <location>
        <begin position="601"/>
        <end position="624"/>
    </location>
</feature>
<feature type="region of interest" description="Required for the inhibitory action of G-beta/gamma-subunits of heterotrimeric G-proteins" evidence="12">
    <location>
        <begin position="617"/>
        <end position="625"/>
    </location>
</feature>
<feature type="region of interest" description="Calmodulin-binding" evidence="9">
    <location>
        <begin position="793"/>
        <end position="816"/>
    </location>
</feature>
<feature type="region of interest" description="Disordered" evidence="2">
    <location>
        <begin position="829"/>
        <end position="851"/>
    </location>
</feature>
<feature type="region of interest" description="Disordered" evidence="2">
    <location>
        <begin position="1610"/>
        <end position="1732"/>
    </location>
</feature>
<feature type="compositionally biased region" description="Basic and acidic residues" evidence="2">
    <location>
        <begin position="831"/>
        <end position="847"/>
    </location>
</feature>
<feature type="compositionally biased region" description="Polar residues" evidence="2">
    <location>
        <begin position="1635"/>
        <end position="1653"/>
    </location>
</feature>
<feature type="compositionally biased region" description="Polar residues" evidence="2">
    <location>
        <begin position="1690"/>
        <end position="1701"/>
    </location>
</feature>
<feature type="binding site" evidence="14 24">
    <location>
        <position position="796"/>
    </location>
    <ligand>
        <name>1,2-dioctanoyl-sn-glycero-3-phospho-(1D-myo-inositol-4,5-bisphosphate)</name>
        <dbReference type="ChEBI" id="CHEBI:83419"/>
    </ligand>
</feature>
<feature type="binding site" evidence="14 23 24">
    <location>
        <position position="1017"/>
    </location>
    <ligand>
        <name>1,2-dioctanoyl-sn-glycero-3-phospho-(1D-myo-inositol-4,5-bisphosphate)</name>
        <dbReference type="ChEBI" id="CHEBI:83419"/>
    </ligand>
</feature>
<feature type="binding site" evidence="14 23 24">
    <location>
        <position position="1018"/>
    </location>
    <ligand>
        <name>1,2-dioctanoyl-sn-glycero-3-phospho-(1D-myo-inositol-4,5-bisphosphate)</name>
        <dbReference type="ChEBI" id="CHEBI:83419"/>
    </ligand>
</feature>
<feature type="splice variant" id="VSP_062446" description="In isoform 7, isoform 8, isoform 9, isoform 10 and isoform 12.">
    <original>PGPWGTVYFLGTAQICSFLSSRWNLEGVMNQTDASRPLNWTIRKLCHAAFLPSVRLLK</original>
    <variation>GKKWRDAGELERGCSDREDSAESRRRSRSASRGRFAESWKRLSSKQGSTKRSGLPAQQTP</variation>
    <location>
        <begin position="2"/>
        <end position="59"/>
    </location>
</feature>
<feature type="splice variant" id="VSP_062447" description="In isoform 5, isoform 6, isoform 7, isoform 8, isoform 9, isoform 10, isoform 11, isoform 12, isoform 13, isoform 14 and isoform 15.">
    <location>
        <begin position="326"/>
        <end position="350"/>
    </location>
</feature>
<feature type="splice variant" id="VSP_062448" description="In isoform 14 and isoform 15.">
    <location>
        <begin position="535"/>
        <end position="552"/>
    </location>
</feature>
<feature type="splice variant" id="VSP_062449" description="In isoform 2, isoform 4, isoform 5, isoform 6, isoform 9, isoform 10, isoform 13 and isoform 15.">
    <original>K</original>
    <variation>KREYPGFGWIYFK</variation>
    <location>
        <position position="569"/>
    </location>
</feature>
<feature type="splice variant" id="VSP_062450" description="In isoform 3, isoform 4, isoform 7, isoform 10 and isoform 15.">
    <location>
        <begin position="617"/>
        <end position="626"/>
    </location>
</feature>
<feature type="splice variant" id="VSP_062451" description="In isoform 6.">
    <location>
        <begin position="800"/>
        <end position="826"/>
    </location>
</feature>
<feature type="splice variant" id="VSP_062452" description="In isoform 8 and isoform 11.">
    <original>P</original>
    <variation>RKQVYDSHTPKSA</variation>
    <location>
        <position position="1088"/>
    </location>
</feature>
<feature type="splice variant" id="VSP_062453" description="In isoform 13.">
    <original>GEETISP</original>
    <variation>EHPFYSV</variation>
    <location>
        <begin position="1344"/>
        <end position="1350"/>
    </location>
</feature>
<feature type="splice variant" id="VSP_062454" description="In isoform 13.">
    <location>
        <begin position="1351"/>
        <end position="1732"/>
    </location>
</feature>
<feature type="mutagenesis site" description="Reduces calmodulin-binding by more than 50%." evidence="9">
    <original>K</original>
    <variation>A</variation>
    <variation>P</variation>
    <variation>G</variation>
    <location>
        <position position="198"/>
    </location>
</feature>
<feature type="mutagenesis site" description="Reduces calmodulin-binding by more than 50%." evidence="9">
    <original>K</original>
    <variation>A</variation>
    <variation>P</variation>
    <variation>G</variation>
    <location>
        <position position="200"/>
    </location>
</feature>
<feature type="mutagenesis site" description="Reduces calmodulin-binding by more than 50%." evidence="9">
    <original>K</original>
    <variation>A</variation>
    <variation>P</variation>
    <variation>G</variation>
    <location>
        <position position="205"/>
    </location>
</feature>
<feature type="mutagenesis site" description="Reduces calmodulin-binding by more than 50%." evidence="9">
    <original>K</original>
    <variation>A</variation>
    <variation>P</variation>
    <variation>G</variation>
    <location>
        <position position="209"/>
    </location>
</feature>
<feature type="strand" evidence="32">
    <location>
        <begin position="139"/>
        <end position="149"/>
    </location>
</feature>
<feature type="strand" evidence="32">
    <location>
        <begin position="152"/>
        <end position="159"/>
    </location>
</feature>
<feature type="helix" evidence="32">
    <location>
        <begin position="164"/>
        <end position="173"/>
    </location>
</feature>
<feature type="strand" evidence="32">
    <location>
        <begin position="181"/>
        <end position="188"/>
    </location>
</feature>
<feature type="turn" evidence="32">
    <location>
        <begin position="197"/>
        <end position="199"/>
    </location>
</feature>
<feature type="helix" evidence="32">
    <location>
        <begin position="200"/>
        <end position="213"/>
    </location>
</feature>
<feature type="strand" evidence="32">
    <location>
        <begin position="216"/>
        <end position="220"/>
    </location>
</feature>
<feature type="strand" evidence="32">
    <location>
        <begin position="223"/>
        <end position="225"/>
    </location>
</feature>
<feature type="helix" evidence="32">
    <location>
        <begin position="227"/>
        <end position="241"/>
    </location>
</feature>
<feature type="strand" evidence="32">
    <location>
        <begin position="247"/>
        <end position="253"/>
    </location>
</feature>
<feature type="helix" evidence="32">
    <location>
        <begin position="254"/>
        <end position="256"/>
    </location>
</feature>
<feature type="strand" evidence="32">
    <location>
        <begin position="260"/>
        <end position="262"/>
    </location>
</feature>
<feature type="strand" evidence="32">
    <location>
        <begin position="268"/>
        <end position="273"/>
    </location>
</feature>
<feature type="helix" evidence="32">
    <location>
        <begin position="278"/>
        <end position="280"/>
    </location>
</feature>
<feature type="strand" evidence="34">
    <location>
        <begin position="281"/>
        <end position="283"/>
    </location>
</feature>
<feature type="strand" evidence="32">
    <location>
        <begin position="290"/>
        <end position="296"/>
    </location>
</feature>
<feature type="helix" evidence="32">
    <location>
        <begin position="307"/>
        <end position="318"/>
    </location>
</feature>
<feature type="strand" evidence="34">
    <location>
        <begin position="319"/>
        <end position="321"/>
    </location>
</feature>
<feature type="strand" evidence="33">
    <location>
        <begin position="323"/>
        <end position="325"/>
    </location>
</feature>
<feature type="strand" evidence="32">
    <location>
        <begin position="357"/>
        <end position="363"/>
    </location>
</feature>
<feature type="helix" evidence="32">
    <location>
        <begin position="366"/>
        <end position="376"/>
    </location>
</feature>
<feature type="strand" evidence="32">
    <location>
        <begin position="378"/>
        <end position="380"/>
    </location>
</feature>
<feature type="strand" evidence="32">
    <location>
        <begin position="384"/>
        <end position="387"/>
    </location>
</feature>
<feature type="helix" evidence="32">
    <location>
        <begin position="388"/>
        <end position="390"/>
    </location>
</feature>
<feature type="helix" evidence="32">
    <location>
        <begin position="393"/>
        <end position="400"/>
    </location>
</feature>
<feature type="turn" evidence="32">
    <location>
        <begin position="422"/>
        <end position="424"/>
    </location>
</feature>
<feature type="strand" evidence="32">
    <location>
        <begin position="428"/>
        <end position="430"/>
    </location>
</feature>
<feature type="turn" evidence="34">
    <location>
        <begin position="431"/>
        <end position="433"/>
    </location>
</feature>
<feature type="helix" evidence="32">
    <location>
        <begin position="437"/>
        <end position="445"/>
    </location>
</feature>
<feature type="strand" evidence="32">
    <location>
        <begin position="448"/>
        <end position="453"/>
    </location>
</feature>
<feature type="strand" evidence="32">
    <location>
        <begin position="455"/>
        <end position="459"/>
    </location>
</feature>
<feature type="helix" evidence="32">
    <location>
        <begin position="463"/>
        <end position="472"/>
    </location>
</feature>
<feature type="strand" evidence="32">
    <location>
        <begin position="473"/>
        <end position="475"/>
    </location>
</feature>
<feature type="helix" evidence="32">
    <location>
        <begin position="479"/>
        <end position="489"/>
    </location>
</feature>
<feature type="helix" evidence="32">
    <location>
        <begin position="492"/>
        <end position="498"/>
    </location>
</feature>
<feature type="strand" evidence="35">
    <location>
        <begin position="500"/>
        <end position="502"/>
    </location>
</feature>
<feature type="helix" evidence="32">
    <location>
        <begin position="510"/>
        <end position="521"/>
    </location>
</feature>
<feature type="helix" evidence="32">
    <location>
        <begin position="524"/>
        <end position="532"/>
    </location>
</feature>
<feature type="helix" evidence="32">
    <location>
        <begin position="537"/>
        <end position="540"/>
    </location>
</feature>
<feature type="helix" evidence="32">
    <location>
        <begin position="543"/>
        <end position="550"/>
    </location>
</feature>
<feature type="strand" evidence="33">
    <location>
        <begin position="554"/>
        <end position="556"/>
    </location>
</feature>
<feature type="helix" evidence="32">
    <location>
        <begin position="560"/>
        <end position="567"/>
    </location>
</feature>
<feature type="turn" evidence="32">
    <location>
        <begin position="568"/>
        <end position="570"/>
    </location>
</feature>
<feature type="helix" evidence="32">
    <location>
        <begin position="580"/>
        <end position="591"/>
    </location>
</feature>
<feature type="helix" evidence="32">
    <location>
        <begin position="598"/>
        <end position="600"/>
    </location>
</feature>
<feature type="helix" evidence="32">
    <location>
        <begin position="602"/>
        <end position="608"/>
    </location>
</feature>
<feature type="helix" evidence="32">
    <location>
        <begin position="660"/>
        <end position="670"/>
    </location>
</feature>
<feature type="helix" evidence="32">
    <location>
        <begin position="674"/>
        <end position="681"/>
    </location>
</feature>
<feature type="strand" evidence="32">
    <location>
        <begin position="683"/>
        <end position="685"/>
    </location>
</feature>
<feature type="helix" evidence="32">
    <location>
        <begin position="687"/>
        <end position="707"/>
    </location>
</feature>
<feature type="helix" evidence="32">
    <location>
        <begin position="713"/>
        <end position="739"/>
    </location>
</feature>
<feature type="helix" evidence="32">
    <location>
        <begin position="741"/>
        <end position="747"/>
    </location>
</feature>
<feature type="helix" evidence="32">
    <location>
        <begin position="753"/>
        <end position="755"/>
    </location>
</feature>
<feature type="helix" evidence="32">
    <location>
        <begin position="760"/>
        <end position="766"/>
    </location>
</feature>
<feature type="helix" evidence="32">
    <location>
        <begin position="770"/>
        <end position="773"/>
    </location>
</feature>
<feature type="helix" evidence="32">
    <location>
        <begin position="776"/>
        <end position="787"/>
    </location>
</feature>
<feature type="helix" evidence="32">
    <location>
        <begin position="798"/>
        <end position="805"/>
    </location>
</feature>
<feature type="helix" evidence="32">
    <location>
        <begin position="807"/>
        <end position="812"/>
    </location>
</feature>
<feature type="helix" evidence="32">
    <location>
        <begin position="886"/>
        <end position="890"/>
    </location>
</feature>
<feature type="helix" evidence="32">
    <location>
        <begin position="894"/>
        <end position="917"/>
    </location>
</feature>
<feature type="helix" evidence="32">
    <location>
        <begin position="926"/>
        <end position="944"/>
    </location>
</feature>
<feature type="turn" evidence="32">
    <location>
        <begin position="945"/>
        <end position="948"/>
    </location>
</feature>
<feature type="strand" evidence="32">
    <location>
        <begin position="949"/>
        <end position="952"/>
    </location>
</feature>
<feature type="helix" evidence="32">
    <location>
        <begin position="954"/>
        <end position="961"/>
    </location>
</feature>
<feature type="helix" evidence="32">
    <location>
        <begin position="965"/>
        <end position="984"/>
    </location>
</feature>
<feature type="strand" evidence="32">
    <location>
        <begin position="985"/>
        <end position="987"/>
    </location>
</feature>
<feature type="helix" evidence="32">
    <location>
        <begin position="988"/>
        <end position="1007"/>
    </location>
</feature>
<feature type="helix" evidence="32">
    <location>
        <begin position="1009"/>
        <end position="1013"/>
    </location>
</feature>
<feature type="helix" evidence="32">
    <location>
        <begin position="1019"/>
        <end position="1055"/>
    </location>
</feature>
<feature type="helix" evidence="32">
    <location>
        <begin position="1064"/>
        <end position="1068"/>
    </location>
</feature>
<feature type="helix" evidence="32">
    <location>
        <begin position="1071"/>
        <end position="1076"/>
    </location>
</feature>
<feature type="turn" evidence="32">
    <location>
        <begin position="1077"/>
        <end position="1079"/>
    </location>
</feature>
<feature type="helix" evidence="32">
    <location>
        <begin position="1083"/>
        <end position="1086"/>
    </location>
</feature>
<feature type="turn" evidence="32">
    <location>
        <begin position="1109"/>
        <end position="1112"/>
    </location>
</feature>
<feature type="helix" evidence="32">
    <location>
        <begin position="1113"/>
        <end position="1126"/>
    </location>
</feature>
<feature type="helix" evidence="32">
    <location>
        <begin position="1128"/>
        <end position="1139"/>
    </location>
</feature>
<feature type="helix" evidence="32">
    <location>
        <begin position="1141"/>
        <end position="1164"/>
    </location>
</feature>
<feature type="helix" evidence="32">
    <location>
        <begin position="1171"/>
        <end position="1173"/>
    </location>
</feature>
<feature type="helix" evidence="32">
    <location>
        <begin position="1175"/>
        <end position="1180"/>
    </location>
</feature>
<feature type="helix" evidence="34">
    <location>
        <begin position="1184"/>
        <end position="1186"/>
    </location>
</feature>
<feature type="turn" evidence="32">
    <location>
        <begin position="1201"/>
        <end position="1204"/>
    </location>
</feature>
<feature type="helix" evidence="32">
    <location>
        <begin position="1210"/>
        <end position="1236"/>
    </location>
</feature>
<feature type="helix" evidence="32">
    <location>
        <begin position="1239"/>
        <end position="1262"/>
    </location>
</feature>
<feature type="region of interest" description="Calmodulin-binding" evidence="9">
    <location sequence="J9SQF3-12">
        <begin position="41"/>
        <end position="64"/>
    </location>
</feature>
<organism>
    <name type="scientific">Mus musculus</name>
    <name type="common">Mouse</name>
    <dbReference type="NCBI Taxonomy" id="10090"/>
    <lineage>
        <taxon>Eukaryota</taxon>
        <taxon>Metazoa</taxon>
        <taxon>Chordata</taxon>
        <taxon>Craniata</taxon>
        <taxon>Vertebrata</taxon>
        <taxon>Euteleostomi</taxon>
        <taxon>Mammalia</taxon>
        <taxon>Eutheria</taxon>
        <taxon>Euarchontoglires</taxon>
        <taxon>Glires</taxon>
        <taxon>Rodentia</taxon>
        <taxon>Myomorpha</taxon>
        <taxon>Muroidea</taxon>
        <taxon>Muridae</taxon>
        <taxon>Murinae</taxon>
        <taxon>Mus</taxon>
        <taxon>Mus</taxon>
    </lineage>
</organism>
<dbReference type="EMBL" id="JX644975">
    <property type="protein sequence ID" value="AFR56503.1"/>
    <property type="molecule type" value="mRNA"/>
</dbReference>
<dbReference type="EMBL" id="JX644979">
    <property type="protein sequence ID" value="AFR56507.1"/>
    <property type="molecule type" value="mRNA"/>
</dbReference>
<dbReference type="EMBL" id="JX644981">
    <property type="protein sequence ID" value="AFR56509.1"/>
    <property type="molecule type" value="mRNA"/>
</dbReference>
<dbReference type="EMBL" id="JX644980">
    <property type="protein sequence ID" value="AFR56508.1"/>
    <property type="molecule type" value="mRNA"/>
</dbReference>
<dbReference type="EMBL" id="JF706722">
    <property type="protein sequence ID" value="AEE80504.1"/>
    <property type="molecule type" value="mRNA"/>
</dbReference>
<dbReference type="EMBL" id="JX644972">
    <property type="protein sequence ID" value="AFR56500.1"/>
    <property type="molecule type" value="mRNA"/>
</dbReference>
<dbReference type="EMBL" id="AJ544536">
    <property type="protein sequence ID" value="CAD67496.1"/>
    <property type="molecule type" value="mRNA"/>
</dbReference>
<dbReference type="EMBL" id="AJ544532">
    <property type="protein sequence ID" value="CAD67492.1"/>
    <property type="molecule type" value="mRNA"/>
</dbReference>
<dbReference type="EMBL" id="AJ544533">
    <property type="protein sequence ID" value="CAD67493.1"/>
    <property type="molecule type" value="mRNA"/>
</dbReference>
<dbReference type="EMBL" id="AJ544534">
    <property type="protein sequence ID" value="CAD67494.1"/>
    <property type="molecule type" value="mRNA"/>
</dbReference>
<dbReference type="EMBL" id="JX644970">
    <property type="protein sequence ID" value="AFR56498.1"/>
    <property type="molecule type" value="mRNA"/>
</dbReference>
<dbReference type="EMBL" id="AJ544535">
    <property type="protein sequence ID" value="CAD67495.1"/>
    <property type="molecule type" value="mRNA"/>
</dbReference>
<dbReference type="EMBL" id="JX644976">
    <property type="protein sequence ID" value="AFR56504.1"/>
    <property type="molecule type" value="mRNA"/>
</dbReference>
<dbReference type="EMBL" id="AC140411">
    <property type="status" value="NOT_ANNOTATED_CDS"/>
    <property type="molecule type" value="Genomic_DNA"/>
</dbReference>
<dbReference type="EMBL" id="JX644978">
    <property type="protein sequence ID" value="AFR56506.1"/>
    <property type="molecule type" value="mRNA"/>
</dbReference>
<dbReference type="EMBL" id="AC132454">
    <property type="status" value="NOT_ANNOTATED_CDS"/>
    <property type="molecule type" value="Genomic_DNA"/>
</dbReference>
<dbReference type="EMBL" id="AC124513">
    <property type="status" value="NOT_ANNOTATED_CDS"/>
    <property type="molecule type" value="Genomic_DNA"/>
</dbReference>
<dbReference type="EMBL" id="AC164427">
    <property type="status" value="NOT_ANNOTATED_CDS"/>
    <property type="molecule type" value="Genomic_DNA"/>
</dbReference>
<dbReference type="EMBL" id="AC123066">
    <property type="status" value="NOT_ANNOTATED_CDS"/>
    <property type="molecule type" value="Genomic_DNA"/>
</dbReference>
<dbReference type="EMBL" id="AC132389">
    <property type="status" value="NOT_ANNOTATED_CDS"/>
    <property type="molecule type" value="Genomic_DNA"/>
</dbReference>
<dbReference type="EMBL" id="BC141400">
    <property type="protein sequence ID" value="AAI41401.1"/>
    <property type="molecule type" value="mRNA"/>
</dbReference>
<dbReference type="EMBL" id="BC141412">
    <property type="protein sequence ID" value="AAI41413.1"/>
    <property type="molecule type" value="mRNA"/>
</dbReference>
<dbReference type="CCDS" id="CCDS29702.1">
    <molecule id="J9SQF3-8"/>
</dbReference>
<dbReference type="CCDS" id="CCDS29703.1">
    <molecule id="J9SQF3-9"/>
</dbReference>
<dbReference type="CCDS" id="CCDS29704.1">
    <molecule id="J9SQF3-10"/>
</dbReference>
<dbReference type="CCDS" id="CCDS29705.1">
    <molecule id="J9SQF3-13"/>
</dbReference>
<dbReference type="CCDS" id="CCDS89354.1">
    <molecule id="J9SQF3-12"/>
</dbReference>
<dbReference type="CCDS" id="CCDS89355.1">
    <molecule id="J9SQF3-7"/>
</dbReference>
<dbReference type="CCDS" id="CCDS89356.1">
    <molecule id="J9SQF3-15"/>
</dbReference>
<dbReference type="CCDS" id="CCDS89357.1">
    <molecule id="J9SQF3-14"/>
</dbReference>
<dbReference type="CCDS" id="CCDS89359.1">
    <molecule id="J9SQF3-6"/>
</dbReference>
<dbReference type="RefSeq" id="NP_001030316.1">
    <molecule id="J9SQF3-8"/>
    <property type="nucleotide sequence ID" value="NM_001035239.3"/>
</dbReference>
<dbReference type="RefSeq" id="NP_001030317.1">
    <molecule id="J9SQF3-9"/>
    <property type="nucleotide sequence ID" value="NM_001035240.3"/>
</dbReference>
<dbReference type="RefSeq" id="NP_001030318.1">
    <molecule id="J9SQF3-10"/>
    <property type="nucleotide sequence ID" value="NM_001035241.3"/>
</dbReference>
<dbReference type="RefSeq" id="NP_001030319.1">
    <molecule id="J9SQF3-12"/>
    <property type="nucleotide sequence ID" value="NM_001035242.2"/>
</dbReference>
<dbReference type="RefSeq" id="NP_001030320.1">
    <molecule id="J9SQF3-7"/>
    <property type="nucleotide sequence ID" value="NM_001035243.3"/>
</dbReference>
<dbReference type="RefSeq" id="NP_001349416.1">
    <molecule id="J9SQF3-2"/>
    <property type="nucleotide sequence ID" value="NM_001362487.1"/>
</dbReference>
<dbReference type="RefSeq" id="NP_001349417.1">
    <molecule id="J9SQF3-4"/>
    <property type="nucleotide sequence ID" value="NM_001362488.1"/>
</dbReference>
<dbReference type="RefSeq" id="NP_001349418.1">
    <molecule id="J9SQF3-1"/>
    <property type="nucleotide sequence ID" value="NM_001362489.1"/>
</dbReference>
<dbReference type="RefSeq" id="NP_001349420.1">
    <molecule id="J9SQF3-5"/>
    <property type="nucleotide sequence ID" value="NM_001362491.1"/>
</dbReference>
<dbReference type="RefSeq" id="NP_001349429.1">
    <molecule id="J9SQF3-6"/>
    <property type="nucleotide sequence ID" value="NM_001362500.1"/>
</dbReference>
<dbReference type="RefSeq" id="NP_001349430.1">
    <molecule id="J9SQF3-3"/>
    <property type="nucleotide sequence ID" value="NM_001362501.1"/>
</dbReference>
<dbReference type="RefSeq" id="NP_001349431.1">
    <molecule id="J9SQF3-11"/>
    <property type="nucleotide sequence ID" value="NM_001362502.1"/>
</dbReference>
<dbReference type="RefSeq" id="NP_001349435.1">
    <molecule id="J9SQF3-14"/>
    <property type="nucleotide sequence ID" value="NM_001362506.1"/>
</dbReference>
<dbReference type="RefSeq" id="NP_001349436.1">
    <molecule id="J9SQF3-15"/>
    <property type="nucleotide sequence ID" value="NM_001362507.1"/>
</dbReference>
<dbReference type="RefSeq" id="NP_796315.2">
    <molecule id="J9SQF3-13"/>
    <property type="nucleotide sequence ID" value="NM_177341.4"/>
</dbReference>
<dbReference type="RefSeq" id="XP_006527022.1">
    <property type="nucleotide sequence ID" value="XM_006526959.3"/>
</dbReference>
<dbReference type="RefSeq" id="XP_006527025.1">
    <property type="nucleotide sequence ID" value="XM_006526962.3"/>
</dbReference>
<dbReference type="RefSeq" id="XP_006527027.1">
    <property type="nucleotide sequence ID" value="XM_006526964.2"/>
</dbReference>
<dbReference type="RefSeq" id="XP_006527030.1">
    <property type="nucleotide sequence ID" value="XM_006526967.3"/>
</dbReference>
<dbReference type="RefSeq" id="XP_006527031.1">
    <property type="nucleotide sequence ID" value="XM_006526968.3"/>
</dbReference>
<dbReference type="RefSeq" id="XP_006527032.1">
    <property type="nucleotide sequence ID" value="XM_006526969.3"/>
</dbReference>
<dbReference type="PDB" id="8DDQ">
    <property type="method" value="EM"/>
    <property type="resolution" value="2.70 A"/>
    <property type="chains" value="A/B/C/D=1-1344"/>
</dbReference>
<dbReference type="PDB" id="8DDR">
    <property type="method" value="EM"/>
    <property type="resolution" value="3.20 A"/>
    <property type="chains" value="A/B/C/D=2-1344"/>
</dbReference>
<dbReference type="PDB" id="8DDS">
    <property type="method" value="EM"/>
    <property type="resolution" value="3.50 A"/>
    <property type="chains" value="A/B/C/D=2-1371"/>
</dbReference>
<dbReference type="PDB" id="8DDT">
    <property type="method" value="EM"/>
    <property type="resolution" value="3.10 A"/>
    <property type="chains" value="A/B/C/D=1-1371"/>
</dbReference>
<dbReference type="PDB" id="8DDU">
    <property type="method" value="EM"/>
    <property type="resolution" value="3.00 A"/>
    <property type="chains" value="A/B/C/D=1-1371"/>
</dbReference>
<dbReference type="PDB" id="8DDV">
    <property type="method" value="EM"/>
    <property type="resolution" value="3.20 A"/>
    <property type="chains" value="A/B/C/D=2-1371"/>
</dbReference>
<dbReference type="PDB" id="8DDW">
    <property type="method" value="EM"/>
    <property type="resolution" value="4.70 A"/>
    <property type="chains" value="A/B/C/D=1-1371"/>
</dbReference>
<dbReference type="PDB" id="8DDX">
    <property type="method" value="EM"/>
    <property type="resolution" value="3.80 A"/>
    <property type="chains" value="A/B/C/D=2-1371"/>
</dbReference>
<dbReference type="PDB" id="8ED7">
    <property type="method" value="EM"/>
    <property type="resolution" value="3.70 A"/>
    <property type="chains" value="A/B/C/D=1-1344"/>
</dbReference>
<dbReference type="PDB" id="8ED8">
    <property type="method" value="EM"/>
    <property type="resolution" value="3.20 A"/>
    <property type="chains" value="A/B/C/D=1-1344"/>
</dbReference>
<dbReference type="PDB" id="8ED9">
    <property type="method" value="EM"/>
    <property type="resolution" value="3.40 A"/>
    <property type="chains" value="A/B/C/D=2-1344"/>
</dbReference>
<dbReference type="PDB" id="9B28">
    <property type="method" value="EM"/>
    <property type="resolution" value="3.24 A"/>
    <property type="chains" value="A/B/C/D=52-1732"/>
</dbReference>
<dbReference type="PDB" id="9B29">
    <property type="method" value="EM"/>
    <property type="resolution" value="3.13 A"/>
    <property type="chains" value="A/B/C/D=52-1732"/>
</dbReference>
<dbReference type="PDB" id="9B2A">
    <property type="method" value="EM"/>
    <property type="resolution" value="3.82 A"/>
    <property type="chains" value="A/B/C/D=52-1732"/>
</dbReference>
<dbReference type="PDBsum" id="8DDQ"/>
<dbReference type="PDBsum" id="8DDR"/>
<dbReference type="PDBsum" id="8DDS"/>
<dbReference type="PDBsum" id="8DDT"/>
<dbReference type="PDBsum" id="8DDU"/>
<dbReference type="PDBsum" id="8DDV"/>
<dbReference type="PDBsum" id="8DDW"/>
<dbReference type="PDBsum" id="8DDX"/>
<dbReference type="PDBsum" id="8ED7"/>
<dbReference type="PDBsum" id="8ED8"/>
<dbReference type="PDBsum" id="8ED9"/>
<dbReference type="PDBsum" id="9B28"/>
<dbReference type="PDBsum" id="9B29"/>
<dbReference type="PDBsum" id="9B2A"/>
<dbReference type="EMDB" id="EMD-27338"/>
<dbReference type="EMDB" id="EMD-27339"/>
<dbReference type="EMDB" id="EMD-27340"/>
<dbReference type="EMDB" id="EMD-27341"/>
<dbReference type="EMDB" id="EMD-27342"/>
<dbReference type="EMDB" id="EMD-27343"/>
<dbReference type="EMDB" id="EMD-27344"/>
<dbReference type="EMDB" id="EMD-27345"/>
<dbReference type="EMDB" id="EMD-28031"/>
<dbReference type="EMDB" id="EMD-28032"/>
<dbReference type="EMDB" id="EMD-28033"/>
<dbReference type="EMDB" id="EMD-44100"/>
<dbReference type="EMDB" id="EMD-44101"/>
<dbReference type="EMDB" id="EMD-44102"/>
<dbReference type="SMR" id="J9SQF3"/>
<dbReference type="PhosphoSitePlus" id="J9SQF3"/>
<dbReference type="PaxDb" id="10090-ENSMUSP00000084857"/>
<dbReference type="ProteomicsDB" id="337289"/>
<dbReference type="ProteomicsDB" id="339452"/>
<dbReference type="ProteomicsDB" id="341108"/>
<dbReference type="ProteomicsDB" id="344731"/>
<dbReference type="Antibodypedia" id="12418">
    <property type="antibodies" value="170 antibodies from 21 providers"/>
</dbReference>
<dbReference type="DNASU" id="226025"/>
<dbReference type="Ensembl" id="ENSMUST00000037901.14">
    <molecule id="J9SQF3-13"/>
    <property type="protein sequence ID" value="ENSMUSP00000042184.7"/>
    <property type="gene ID" value="ENSMUSG00000052387.17"/>
</dbReference>
<dbReference type="Ensembl" id="ENSMUST00000074770.13">
    <molecule id="J9SQF3-10"/>
    <property type="protein sequence ID" value="ENSMUSP00000074328.6"/>
    <property type="gene ID" value="ENSMUSG00000052387.17"/>
</dbReference>
<dbReference type="Ensembl" id="ENSMUST00000087576.12">
    <molecule id="J9SQF3-9"/>
    <property type="protein sequence ID" value="ENSMUSP00000084857.5"/>
    <property type="gene ID" value="ENSMUSG00000052387.17"/>
</dbReference>
<dbReference type="Ensembl" id="ENSMUST00000235780.2">
    <molecule id="J9SQF3-15"/>
    <property type="protein sequence ID" value="ENSMUSP00000158494.2"/>
    <property type="gene ID" value="ENSMUSG00000052387.17"/>
</dbReference>
<dbReference type="Ensembl" id="ENSMUST00000236312.2">
    <molecule id="J9SQF3-7"/>
    <property type="protein sequence ID" value="ENSMUSP00000157673.2"/>
    <property type="gene ID" value="ENSMUSG00000052387.17"/>
</dbReference>
<dbReference type="Ensembl" id="ENSMUST00000236372.2">
    <molecule id="J9SQF3-6"/>
    <property type="protein sequence ID" value="ENSMUSP00000157511.2"/>
    <property type="gene ID" value="ENSMUSG00000052387.17"/>
</dbReference>
<dbReference type="Ensembl" id="ENSMUST00000237357.2">
    <molecule id="J9SQF3-12"/>
    <property type="protein sequence ID" value="ENSMUSP00000157607.2"/>
    <property type="gene ID" value="ENSMUSG00000052387.17"/>
</dbReference>
<dbReference type="Ensembl" id="ENSMUST00000237820.2">
    <molecule id="J9SQF3-8"/>
    <property type="protein sequence ID" value="ENSMUSP00000157909.2"/>
    <property type="gene ID" value="ENSMUSG00000052387.17"/>
</dbReference>
<dbReference type="Ensembl" id="ENSMUST00000238066.2">
    <molecule id="J9SQF3-14"/>
    <property type="protein sequence ID" value="ENSMUSP00000157646.2"/>
    <property type="gene ID" value="ENSMUSG00000052387.17"/>
</dbReference>
<dbReference type="GeneID" id="226025"/>
<dbReference type="KEGG" id="mmu:226025"/>
<dbReference type="UCSC" id="uc008gzu.1">
    <molecule id="J9SQF3-1"/>
    <property type="organism name" value="mouse"/>
</dbReference>
<dbReference type="AGR" id="MGI:2443101"/>
<dbReference type="CTD" id="80036"/>
<dbReference type="MGI" id="MGI:2443101">
    <property type="gene designation" value="Trpm3"/>
</dbReference>
<dbReference type="VEuPathDB" id="HostDB:ENSMUSG00000052387"/>
<dbReference type="eggNOG" id="KOG3614">
    <property type="taxonomic scope" value="Eukaryota"/>
</dbReference>
<dbReference type="GeneTree" id="ENSGT00940000157366"/>
<dbReference type="HOGENOM" id="CLU_001390_4_1_1"/>
<dbReference type="TreeFam" id="TF314204"/>
<dbReference type="BioGRID-ORCS" id="226025">
    <property type="hits" value="1 hit in 77 CRISPR screens"/>
</dbReference>
<dbReference type="ChiTaRS" id="Trpm3">
    <property type="organism name" value="mouse"/>
</dbReference>
<dbReference type="Proteomes" id="UP000000589">
    <property type="component" value="Chromosome 19"/>
</dbReference>
<dbReference type="Bgee" id="ENSMUSG00000052387">
    <property type="expression patterns" value="Expressed in pigmented layer of retina and 157 other cell types or tissues"/>
</dbReference>
<dbReference type="GO" id="GO:0005886">
    <property type="term" value="C:plasma membrane"/>
    <property type="evidence" value="ECO:0007669"/>
    <property type="project" value="UniProtKB-SubCell"/>
</dbReference>
<dbReference type="GO" id="GO:0005262">
    <property type="term" value="F:calcium channel activity"/>
    <property type="evidence" value="ECO:0000314"/>
    <property type="project" value="UniProtKB"/>
</dbReference>
<dbReference type="GO" id="GO:0005516">
    <property type="term" value="F:calmodulin binding"/>
    <property type="evidence" value="ECO:0007669"/>
    <property type="project" value="UniProtKB-KW"/>
</dbReference>
<dbReference type="GO" id="GO:0031683">
    <property type="term" value="F:G-protein beta/gamma-subunit complex binding"/>
    <property type="evidence" value="ECO:0000314"/>
    <property type="project" value="UniProtKB"/>
</dbReference>
<dbReference type="GO" id="GO:0005261">
    <property type="term" value="F:monoatomic cation channel activity"/>
    <property type="evidence" value="ECO:0000266"/>
    <property type="project" value="MGI"/>
</dbReference>
<dbReference type="GO" id="GO:0005546">
    <property type="term" value="F:phosphatidylinositol-4,5-bisphosphate binding"/>
    <property type="evidence" value="ECO:0000314"/>
    <property type="project" value="UniProtKB"/>
</dbReference>
<dbReference type="GO" id="GO:0097603">
    <property type="term" value="F:temperature-gated ion channel activity"/>
    <property type="evidence" value="ECO:0000315"/>
    <property type="project" value="UniProtKB"/>
</dbReference>
<dbReference type="GO" id="GO:0005385">
    <property type="term" value="F:zinc ion transmembrane transporter activity"/>
    <property type="evidence" value="ECO:0000314"/>
    <property type="project" value="UniProtKB"/>
</dbReference>
<dbReference type="GO" id="GO:0070588">
    <property type="term" value="P:calcium ion transmembrane transport"/>
    <property type="evidence" value="ECO:0000314"/>
    <property type="project" value="UniProtKB"/>
</dbReference>
<dbReference type="GO" id="GO:0006812">
    <property type="term" value="P:monoatomic cation transport"/>
    <property type="evidence" value="ECO:0000314"/>
    <property type="project" value="UniProtKB"/>
</dbReference>
<dbReference type="GO" id="GO:0051289">
    <property type="term" value="P:protein homotetramerization"/>
    <property type="evidence" value="ECO:0000314"/>
    <property type="project" value="UniProtKB"/>
</dbReference>
<dbReference type="GO" id="GO:0006814">
    <property type="term" value="P:sodium ion transport"/>
    <property type="evidence" value="ECO:0000314"/>
    <property type="project" value="UniProtKB"/>
</dbReference>
<dbReference type="GO" id="GO:0071577">
    <property type="term" value="P:zinc ion transmembrane transport"/>
    <property type="evidence" value="ECO:0000314"/>
    <property type="project" value="UniProtKB"/>
</dbReference>
<dbReference type="FunFam" id="1.20.5.1010:FF:000001">
    <property type="entry name" value="Transient receptor potential cation channel subfamily M member 3"/>
    <property type="match status" value="1"/>
</dbReference>
<dbReference type="Gene3D" id="1.20.5.1010">
    <property type="entry name" value="TRPM, tetramerisation domain"/>
    <property type="match status" value="1"/>
</dbReference>
<dbReference type="InterPro" id="IPR005821">
    <property type="entry name" value="Ion_trans_dom"/>
</dbReference>
<dbReference type="InterPro" id="IPR050927">
    <property type="entry name" value="TRPM"/>
</dbReference>
<dbReference type="InterPro" id="IPR041491">
    <property type="entry name" value="TRPM_SLOG"/>
</dbReference>
<dbReference type="InterPro" id="IPR032415">
    <property type="entry name" value="TRPM_tetra"/>
</dbReference>
<dbReference type="InterPro" id="IPR037162">
    <property type="entry name" value="TRPM_tetra_sf"/>
</dbReference>
<dbReference type="PANTHER" id="PTHR13800:SF7">
    <property type="entry name" value="TRANSIENT RECEPTOR POTENTIAL CATION CHANNEL SUBFAMILY M MEMBER 3"/>
    <property type="match status" value="1"/>
</dbReference>
<dbReference type="PANTHER" id="PTHR13800">
    <property type="entry name" value="TRANSIENT RECEPTOR POTENTIAL CATION CHANNEL, SUBFAMILY M, MEMBER 6"/>
    <property type="match status" value="1"/>
</dbReference>
<dbReference type="Pfam" id="PF00520">
    <property type="entry name" value="Ion_trans"/>
    <property type="match status" value="1"/>
</dbReference>
<dbReference type="Pfam" id="PF18139">
    <property type="entry name" value="LSDAT_euk"/>
    <property type="match status" value="1"/>
</dbReference>
<dbReference type="Pfam" id="PF25508">
    <property type="entry name" value="TRPM2"/>
    <property type="match status" value="1"/>
</dbReference>
<dbReference type="Pfam" id="PF16519">
    <property type="entry name" value="TRPM_tetra"/>
    <property type="match status" value="1"/>
</dbReference>
<evidence type="ECO:0000250" key="1">
    <source>
        <dbReference type="UniProtKB" id="Q9HCF6"/>
    </source>
</evidence>
<evidence type="ECO:0000256" key="2">
    <source>
        <dbReference type="SAM" id="MobiDB-lite"/>
    </source>
</evidence>
<evidence type="ECO:0000269" key="3">
    <source>
    </source>
</evidence>
<evidence type="ECO:0000269" key="4">
    <source>
    </source>
</evidence>
<evidence type="ECO:0000269" key="5">
    <source>
    </source>
</evidence>
<evidence type="ECO:0000269" key="6">
    <source>
    </source>
</evidence>
<evidence type="ECO:0000269" key="7">
    <source>
    </source>
</evidence>
<evidence type="ECO:0000269" key="8">
    <source>
    </source>
</evidence>
<evidence type="ECO:0000269" key="9">
    <source>
    </source>
</evidence>
<evidence type="ECO:0000269" key="10">
    <source>
    </source>
</evidence>
<evidence type="ECO:0000269" key="11">
    <source>
    </source>
</evidence>
<evidence type="ECO:0000269" key="12">
    <source>
    </source>
</evidence>
<evidence type="ECO:0000269" key="13">
    <source>
    </source>
</evidence>
<evidence type="ECO:0000269" key="14">
    <source>
    </source>
</evidence>
<evidence type="ECO:0000303" key="15">
    <source>
    </source>
</evidence>
<evidence type="ECO:0000303" key="16">
    <source>
    </source>
</evidence>
<evidence type="ECO:0000305" key="17"/>
<evidence type="ECO:0000305" key="18">
    <source>
    </source>
</evidence>
<evidence type="ECO:0000312" key="19">
    <source>
        <dbReference type="MGI" id="MGI:2443101"/>
    </source>
</evidence>
<evidence type="ECO:0007744" key="20">
    <source>
        <dbReference type="PDB" id="8DDQ"/>
    </source>
</evidence>
<evidence type="ECO:0007744" key="21">
    <source>
        <dbReference type="PDB" id="8DDR"/>
    </source>
</evidence>
<evidence type="ECO:0007744" key="22">
    <source>
        <dbReference type="PDB" id="8DDS"/>
    </source>
</evidence>
<evidence type="ECO:0007744" key="23">
    <source>
        <dbReference type="PDB" id="8DDT"/>
    </source>
</evidence>
<evidence type="ECO:0007744" key="24">
    <source>
        <dbReference type="PDB" id="8DDU"/>
    </source>
</evidence>
<evidence type="ECO:0007744" key="25">
    <source>
        <dbReference type="PDB" id="8DDV"/>
    </source>
</evidence>
<evidence type="ECO:0007744" key="26">
    <source>
        <dbReference type="PDB" id="8DDW"/>
    </source>
</evidence>
<evidence type="ECO:0007744" key="27">
    <source>
        <dbReference type="PDB" id="8DDX"/>
    </source>
</evidence>
<evidence type="ECO:0007744" key="28">
    <source>
        <dbReference type="PDB" id="8ED7"/>
    </source>
</evidence>
<evidence type="ECO:0007744" key="29">
    <source>
        <dbReference type="PDB" id="8ED8"/>
    </source>
</evidence>
<evidence type="ECO:0007744" key="30">
    <source>
        <dbReference type="PDB" id="8ED9"/>
    </source>
</evidence>
<evidence type="ECO:0007744" key="31">
    <source>
    </source>
</evidence>
<evidence type="ECO:0007829" key="32">
    <source>
        <dbReference type="PDB" id="8DDQ"/>
    </source>
</evidence>
<evidence type="ECO:0007829" key="33">
    <source>
        <dbReference type="PDB" id="8DDT"/>
    </source>
</evidence>
<evidence type="ECO:0007829" key="34">
    <source>
        <dbReference type="PDB" id="8DDU"/>
    </source>
</evidence>
<evidence type="ECO:0007829" key="35">
    <source>
        <dbReference type="PDB" id="8ED8"/>
    </source>
</evidence>
<reference key="1">
    <citation type="journal article" date="2005" name="J. Biol. Chem.">
        <title>Alternative splicing switches the divalent cation selectivity of TRPM3 channels.</title>
        <authorList>
            <person name="Oberwinkler J."/>
            <person name="Lis A."/>
            <person name="Giehl K.M."/>
            <person name="Flockerzi V."/>
            <person name="Philipp S.E."/>
        </authorList>
    </citation>
    <scope>NUCLEOTIDE SEQUENCE [MRNA]</scope>
    <scope>FUNCTION</scope>
    <scope>TRANSPORTER ACTIVITY (ISOFORMS 8 AND 12)</scope>
    <scope>ACTIVITY REGULATION (ISOFORMS 8 AND 12)</scope>
</reference>
<reference key="2">
    <citation type="journal article" date="2012" name="J. Biol. Chem.">
        <title>Alternative splicing of a protein domain indispensable for function of transient receptor potential melastatin 3 (TRPM3) ion channels.</title>
        <authorList>
            <person name="Fruehwald J."/>
            <person name="Camacho Londono J."/>
            <person name="Dembla S."/>
            <person name="Mannebach S."/>
            <person name="Lis A."/>
            <person name="Drews A."/>
            <person name="Wissenbach U."/>
            <person name="Oberwinkler J."/>
            <person name="Philipp S.E."/>
        </authorList>
    </citation>
    <scope>NUCLEOTIDE SEQUENCE [MRNA] (ISOFORMS 1; 2; 3; 4; 5; 6; 11; 14 AND 15)</scope>
    <scope>FUNCTION (ISOFORMS 14 AND 15)</scope>
</reference>
<reference key="3">
    <citation type="submission" date="2011-03" db="EMBL/GenBank/DDBJ databases">
        <title>Functional properties of TRPM3.</title>
        <authorList>
            <person name="Chen X."/>
            <person name="Chubanov V."/>
            <person name="Gudermann T."/>
            <person name="Hofmann T."/>
        </authorList>
    </citation>
    <scope>NUCLEOTIDE SEQUENCE [MRNA] (ISOFORM 5)</scope>
    <source>
        <strain>C57BL/6J</strain>
    </source>
</reference>
<reference key="4">
    <citation type="journal article" date="2009" name="PLoS Biol.">
        <title>Lineage-specific biology revealed by a finished genome assembly of the mouse.</title>
        <authorList>
            <person name="Church D.M."/>
            <person name="Goodstadt L."/>
            <person name="Hillier L.W."/>
            <person name="Zody M.C."/>
            <person name="Goldstein S."/>
            <person name="She X."/>
            <person name="Bult C.J."/>
            <person name="Agarwala R."/>
            <person name="Cherry J.L."/>
            <person name="DiCuccio M."/>
            <person name="Hlavina W."/>
            <person name="Kapustin Y."/>
            <person name="Meric P."/>
            <person name="Maglott D."/>
            <person name="Birtle Z."/>
            <person name="Marques A.C."/>
            <person name="Graves T."/>
            <person name="Zhou S."/>
            <person name="Teague B."/>
            <person name="Potamousis K."/>
            <person name="Churas C."/>
            <person name="Place M."/>
            <person name="Herschleb J."/>
            <person name="Runnheim R."/>
            <person name="Forrest D."/>
            <person name="Amos-Landgraf J."/>
            <person name="Schwartz D.C."/>
            <person name="Cheng Z."/>
            <person name="Lindblad-Toh K."/>
            <person name="Eichler E.E."/>
            <person name="Ponting C.P."/>
        </authorList>
    </citation>
    <scope>NUCLEOTIDE SEQUENCE [LARGE SCALE GENOMIC DNA]</scope>
    <source>
        <strain>C57BL/6J</strain>
    </source>
</reference>
<reference key="5">
    <citation type="journal article" date="2004" name="Genome Res.">
        <title>The status, quality, and expansion of the NIH full-length cDNA project: the Mammalian Gene Collection (MGC).</title>
        <authorList>
            <consortium name="The MGC Project Team"/>
        </authorList>
    </citation>
    <scope>NUCLEOTIDE SEQUENCE [LARGE SCALE MRNA] (ISOFORM 13)</scope>
    <source>
        <tissue>Brain</tissue>
    </source>
</reference>
<reference key="6">
    <citation type="journal article" date="2008" name="Nat. Cell Biol.">
        <title>Transient receptor potential M3 channels are ionotropic steroid receptors in pancreatic beta cells.</title>
        <authorList>
            <person name="Wagner T.F."/>
            <person name="Loch S."/>
            <person name="Lambert S."/>
            <person name="Straub I."/>
            <person name="Mannebach S."/>
            <person name="Mathar I."/>
            <person name="Duefer M."/>
            <person name="Lis A."/>
            <person name="Flockerzi V."/>
            <person name="Philipp S.E."/>
            <person name="Oberwinkler J."/>
        </authorList>
    </citation>
    <scope>FUNCTION</scope>
    <scope>TRANSPORTER ACTIVITY</scope>
    <scope>ACTIVITY REGULATION</scope>
</reference>
<reference evidence="31" key="7">
    <citation type="journal article" date="2010" name="Cell">
        <title>A tissue-specific atlas of mouse protein phosphorylation and expression.</title>
        <authorList>
            <person name="Huttlin E.L."/>
            <person name="Jedrychowski M.P."/>
            <person name="Elias J.E."/>
            <person name="Goswami T."/>
            <person name="Rad R."/>
            <person name="Beausoleil S.A."/>
            <person name="Villen J."/>
            <person name="Haas W."/>
            <person name="Sowa M.E."/>
            <person name="Gygi S.P."/>
        </authorList>
    </citation>
    <scope>IDENTIFICATION BY MASS SPECTROMETRY [LARGE SCALE ANALYSIS]</scope>
</reference>
<reference key="8">
    <citation type="journal article" date="2010" name="Pflugers Arch.">
        <title>TRPM3 channels provide a regulated influx pathway for zinc in pancreatic beta cells.</title>
        <authorList>
            <person name="Wagner T.F."/>
            <person name="Drews A."/>
            <person name="Loch S."/>
            <person name="Mohr F."/>
            <person name="Philipp S.E."/>
            <person name="Lambert S."/>
            <person name="Oberwinkler J."/>
        </authorList>
    </citation>
    <scope>FUNCTION</scope>
    <scope>TRANSPORTER ACTIVITY</scope>
</reference>
<reference key="9">
    <citation type="journal article" date="2011" name="Neuron">
        <title>TRPM3 is a nociceptor channel involved in the detection of noxious heat.</title>
        <authorList>
            <person name="Vriens J."/>
            <person name="Owsianik G."/>
            <person name="Hofmann T."/>
            <person name="Philipp S.E."/>
            <person name="Stab J."/>
            <person name="Chen X."/>
            <person name="Benoit M."/>
            <person name="Xue F."/>
            <person name="Janssens A."/>
            <person name="Kerselaers S."/>
            <person name="Oberwinkler J."/>
            <person name="Vennekens R."/>
            <person name="Gudermann T."/>
            <person name="Nilius B."/>
            <person name="Voets T."/>
        </authorList>
    </citation>
    <scope>DISRUPTION PHENOTYPE</scope>
    <scope>FUNCTION</scope>
    <scope>ACTIVITY REGULATION</scope>
</reference>
<reference key="10">
    <citation type="journal article" date="2014" name="Br. J. Pharmacol.">
        <title>Structural requirements of steroidal agonists of transient receptor potential melastatin 3 (TRPM3) cation channels.</title>
        <authorList>
            <person name="Drews A."/>
            <person name="Mohr F."/>
            <person name="Rizun O."/>
            <person name="Wagner T.F."/>
            <person name="Dembla S."/>
            <person name="Rudolph S."/>
            <person name="Lambert S."/>
            <person name="Konrad M."/>
            <person name="Philipp S.E."/>
            <person name="Behrendt M."/>
            <person name="Marchais-Oberwinkler S."/>
            <person name="Covey D.F."/>
            <person name="Oberwinkler J."/>
        </authorList>
    </citation>
    <scope>ACTIVITY REGULATION</scope>
</reference>
<reference key="11">
    <citation type="journal article" date="2018" name="Cell Calcium">
        <title>Ca2+-dependent regulation and binding of calmodulin to multiple sites of Transient Receptor Potential Melastatin 3 (TRPM3) ion channels.</title>
        <authorList>
            <person name="Przibilla J."/>
            <person name="Dembla S."/>
            <person name="Rizun O."/>
            <person name="Lis A."/>
            <person name="Jung M."/>
            <person name="Oberwinkler J."/>
            <person name="Beck A."/>
            <person name="Philipp S.E."/>
        </authorList>
    </citation>
    <scope>ACTIVITY REGULATION</scope>
    <scope>CALMODULIN-BINDING</scope>
    <scope>MUTAGENESIS OF LYS-198; LYS-200; LYS-205 AND LYS-209</scope>
</reference>
<reference key="12">
    <citation type="journal article" date="2019" name="J. Mol. Cell. Cardiol.">
        <title>Activation of the cation channel TRPM3 in perivascular nerves induces vasodilation of resistance arteries.</title>
        <authorList>
            <person name="Alonso-Carbajo L."/>
            <person name="Alpizar Y.A."/>
            <person name="Startek J.B."/>
            <person name="Lopez-Lopez J.R."/>
            <person name="Perez-Garcia M.T."/>
            <person name="Talavera K."/>
        </authorList>
    </citation>
    <scope>FUNCTION</scope>
</reference>
<reference key="13">
    <citation type="journal article" date="2020" name="Proc. Natl. Acad. Sci. U.S.A.">
        <title>The structural basis for an on-off switch controlling Gbetagamma-mediated inhibition of TRPM3 channels.</title>
        <authorList>
            <person name="Behrendt M."/>
            <person name="Gruss F."/>
            <person name="Enzeroth R."/>
            <person name="Dembla S."/>
            <person name="Zhao S."/>
            <person name="Crassous P.A."/>
            <person name="Mohr F."/>
            <person name="Nys M."/>
            <person name="Louros N."/>
            <person name="Gallardo R."/>
            <person name="Zorzini V."/>
            <person name="Wagner D."/>
            <person name="Economou A."/>
            <person name="Rousseau F."/>
            <person name="Schymkowitz J."/>
            <person name="Philipp S.E."/>
            <person name="Rohacs T."/>
            <person name="Ulens C."/>
            <person name="Oberwinkler J."/>
        </authorList>
    </citation>
    <scope>ACTIVITY REGULATION (ISOFORMS 7 AND 10)</scope>
</reference>
<reference key="14">
    <citation type="journal article" date="2021" name="J. Neurosci.">
        <title>TRPM3 Channels Play Roles in Heat Hypersensitivity and Spontaneous Pain after Nerve Injury.</title>
        <authorList>
            <person name="Su S."/>
            <person name="Yudin Y."/>
            <person name="Kim N."/>
            <person name="Tao Y.X."/>
            <person name="Rohacs T."/>
        </authorList>
    </citation>
    <scope>DISRUPTION PHENOTYPE</scope>
    <scope>FUNCTION</scope>
</reference>
<reference key="15">
    <citation type="journal article" date="2022" name="Br. J. Pharmacol.">
        <title>Pharmacological properties of TRPM3 isoforms are determined by the length of the pore loop.</title>
        <authorList>
            <person name="Held K."/>
            <person name="Aloi V.D."/>
            <person name="Freitas A.C.N."/>
            <person name="Janssens A."/>
            <person name="Segal A."/>
            <person name="Przibilla J."/>
            <person name="Philipp S.E."/>
            <person name="Wang Y.T."/>
            <person name="Voets T."/>
            <person name="Vriens J."/>
        </authorList>
    </citation>
    <scope>FUNCTION (ISOFORMS 8 AND 12)</scope>
    <scope>TRANSPORTER ACTIVITY (ISOFORMS 8 AND 12)</scope>
</reference>
<reference evidence="20 21 22 23 24 25 26 27 28 29 30" key="16">
    <citation type="journal article" date="2023" name="Neuron">
        <title>Structural and functional analyses of a GPCR-inhibited ion channel TRPM3.</title>
        <authorList>
            <person name="Zhao C."/>
            <person name="MacKinnon R."/>
        </authorList>
    </citation>
    <scope>STRUCTURE BY ELECTRON MICROSCOPY (2.70 ANGSTROMS) OF 1-1371 IN COMPLEX WITH PI(4,5)P2; PREGNELONONE SULFATE AND A G-PROTEIN BETA/GAMMA FRAGMENT (ISOFORM 12)</scope>
    <scope>SUBUNIT</scope>
    <scope>ACTIVITY REGULATION</scope>
</reference>
<name>TRPM3_MOUSE</name>
<accession>J9SQF3</accession>
<accession>B2RUS0</accession>
<accession>F6M2J8</accession>
<accession>J9S2Z5</accession>
<accession>J9S305</accession>
<accession>J9SQE7</accession>
<accession>J9SQF8</accession>
<accession>J9SUA7</accession>
<accession>J9T153</accession>
<accession>Q5F4S6</accession>
<accession>Q5F4S7</accession>
<accession>Q5F4S8</accession>
<accession>Q5F4S9</accession>
<accession>Q5F4T0</accession>